<reference key="1">
    <citation type="journal article" date="2010" name="BMC Genomics">
        <title>A genomic perspective on the potential of Actinobacillus succinogenes for industrial succinate production.</title>
        <authorList>
            <person name="McKinlay J.B."/>
            <person name="Laivenieks M."/>
            <person name="Schindler B.D."/>
            <person name="McKinlay A.A."/>
            <person name="Siddaramappa S."/>
            <person name="Challacombe J.F."/>
            <person name="Lowry S.R."/>
            <person name="Clum A."/>
            <person name="Lapidus A.L."/>
            <person name="Burkhart K.B."/>
            <person name="Harkins V."/>
            <person name="Vieille C."/>
        </authorList>
    </citation>
    <scope>NUCLEOTIDE SEQUENCE [LARGE SCALE GENOMIC DNA]</scope>
    <source>
        <strain>ATCC 55618 / DSM 22257 / CCUG 43843 / 130Z</strain>
    </source>
</reference>
<feature type="chain" id="PRO_1000071843" description="Galactokinase">
    <location>
        <begin position="1"/>
        <end position="385"/>
    </location>
</feature>
<feature type="active site" description="Proton acceptor" evidence="1">
    <location>
        <position position="174"/>
    </location>
</feature>
<feature type="binding site" evidence="1">
    <location>
        <begin position="34"/>
        <end position="37"/>
    </location>
    <ligand>
        <name>substrate</name>
    </ligand>
</feature>
<feature type="binding site" evidence="1">
    <location>
        <begin position="124"/>
        <end position="130"/>
    </location>
    <ligand>
        <name>ATP</name>
        <dbReference type="ChEBI" id="CHEBI:30616"/>
    </ligand>
</feature>
<feature type="binding site" evidence="1">
    <location>
        <position position="130"/>
    </location>
    <ligand>
        <name>Mg(2+)</name>
        <dbReference type="ChEBI" id="CHEBI:18420"/>
    </ligand>
</feature>
<feature type="binding site" evidence="1">
    <location>
        <position position="162"/>
    </location>
    <ligand>
        <name>Mg(2+)</name>
        <dbReference type="ChEBI" id="CHEBI:18420"/>
    </ligand>
</feature>
<feature type="binding site" evidence="1">
    <location>
        <position position="223"/>
    </location>
    <ligand>
        <name>substrate</name>
    </ligand>
</feature>
<feature type="site" description="Transition state stabilizer" evidence="1">
    <location>
        <position position="28"/>
    </location>
</feature>
<comment type="function">
    <text evidence="1">Catalyzes the transfer of the gamma-phosphate of ATP to D-galactose to form alpha-D-galactose-1-phosphate (Gal-1-P).</text>
</comment>
<comment type="catalytic activity">
    <reaction evidence="1">
        <text>alpha-D-galactose + ATP = alpha-D-galactose 1-phosphate + ADP + H(+)</text>
        <dbReference type="Rhea" id="RHEA:13553"/>
        <dbReference type="ChEBI" id="CHEBI:15378"/>
        <dbReference type="ChEBI" id="CHEBI:28061"/>
        <dbReference type="ChEBI" id="CHEBI:30616"/>
        <dbReference type="ChEBI" id="CHEBI:58336"/>
        <dbReference type="ChEBI" id="CHEBI:456216"/>
        <dbReference type="EC" id="2.7.1.6"/>
    </reaction>
</comment>
<comment type="pathway">
    <text evidence="1">Carbohydrate metabolism; galactose metabolism.</text>
</comment>
<comment type="subcellular location">
    <subcellularLocation>
        <location evidence="1">Cytoplasm</location>
    </subcellularLocation>
</comment>
<comment type="similarity">
    <text evidence="1">Belongs to the GHMP kinase family. GalK subfamily.</text>
</comment>
<gene>
    <name evidence="1" type="primary">galK</name>
    <name type="ordered locus">Asuc_1900</name>
</gene>
<keyword id="KW-0067">ATP-binding</keyword>
<keyword id="KW-0119">Carbohydrate metabolism</keyword>
<keyword id="KW-0963">Cytoplasm</keyword>
<keyword id="KW-0299">Galactose metabolism</keyword>
<keyword id="KW-0418">Kinase</keyword>
<keyword id="KW-0460">Magnesium</keyword>
<keyword id="KW-0479">Metal-binding</keyword>
<keyword id="KW-0547">Nucleotide-binding</keyword>
<keyword id="KW-1185">Reference proteome</keyword>
<keyword id="KW-0808">Transferase</keyword>
<evidence type="ECO:0000255" key="1">
    <source>
        <dbReference type="HAMAP-Rule" id="MF_00246"/>
    </source>
</evidence>
<protein>
    <recommendedName>
        <fullName evidence="1">Galactokinase</fullName>
        <ecNumber evidence="1">2.7.1.6</ecNumber>
    </recommendedName>
    <alternativeName>
        <fullName evidence="1">Galactose kinase</fullName>
    </alternativeName>
</protein>
<name>GAL1_ACTSZ</name>
<dbReference type="EC" id="2.7.1.6" evidence="1"/>
<dbReference type="EMBL" id="CP000746">
    <property type="protein sequence ID" value="ABR75249.1"/>
    <property type="molecule type" value="Genomic_DNA"/>
</dbReference>
<dbReference type="RefSeq" id="WP_012073626.1">
    <property type="nucleotide sequence ID" value="NC_009655.1"/>
</dbReference>
<dbReference type="SMR" id="A6VQK2"/>
<dbReference type="STRING" id="339671.Asuc_1900"/>
<dbReference type="KEGG" id="asu:Asuc_1900"/>
<dbReference type="eggNOG" id="COG0153">
    <property type="taxonomic scope" value="Bacteria"/>
</dbReference>
<dbReference type="HOGENOM" id="CLU_017814_2_1_6"/>
<dbReference type="OrthoDB" id="250531at2"/>
<dbReference type="UniPathway" id="UPA00214"/>
<dbReference type="Proteomes" id="UP000001114">
    <property type="component" value="Chromosome"/>
</dbReference>
<dbReference type="GO" id="GO:0005829">
    <property type="term" value="C:cytosol"/>
    <property type="evidence" value="ECO:0007669"/>
    <property type="project" value="TreeGrafter"/>
</dbReference>
<dbReference type="GO" id="GO:0005524">
    <property type="term" value="F:ATP binding"/>
    <property type="evidence" value="ECO:0007669"/>
    <property type="project" value="UniProtKB-UniRule"/>
</dbReference>
<dbReference type="GO" id="GO:0004335">
    <property type="term" value="F:galactokinase activity"/>
    <property type="evidence" value="ECO:0007669"/>
    <property type="project" value="UniProtKB-UniRule"/>
</dbReference>
<dbReference type="GO" id="GO:0000287">
    <property type="term" value="F:magnesium ion binding"/>
    <property type="evidence" value="ECO:0007669"/>
    <property type="project" value="UniProtKB-UniRule"/>
</dbReference>
<dbReference type="GO" id="GO:0006012">
    <property type="term" value="P:galactose metabolic process"/>
    <property type="evidence" value="ECO:0007669"/>
    <property type="project" value="UniProtKB-UniRule"/>
</dbReference>
<dbReference type="FunFam" id="3.30.230.10:FF:000017">
    <property type="entry name" value="Galactokinase"/>
    <property type="match status" value="1"/>
</dbReference>
<dbReference type="FunFam" id="3.30.70.890:FF:000001">
    <property type="entry name" value="Galactokinase"/>
    <property type="match status" value="1"/>
</dbReference>
<dbReference type="Gene3D" id="3.30.230.10">
    <property type="match status" value="1"/>
</dbReference>
<dbReference type="Gene3D" id="3.30.70.890">
    <property type="entry name" value="GHMP kinase, C-terminal domain"/>
    <property type="match status" value="1"/>
</dbReference>
<dbReference type="HAMAP" id="MF_00246">
    <property type="entry name" value="Galactokinase"/>
    <property type="match status" value="1"/>
</dbReference>
<dbReference type="InterPro" id="IPR000705">
    <property type="entry name" value="Galactokinase"/>
</dbReference>
<dbReference type="InterPro" id="IPR022963">
    <property type="entry name" value="Galactokinase_bac"/>
</dbReference>
<dbReference type="InterPro" id="IPR019741">
    <property type="entry name" value="Galactokinase_CS"/>
</dbReference>
<dbReference type="InterPro" id="IPR019539">
    <property type="entry name" value="GalKase_N"/>
</dbReference>
<dbReference type="InterPro" id="IPR013750">
    <property type="entry name" value="GHMP_kinase_C_dom"/>
</dbReference>
<dbReference type="InterPro" id="IPR036554">
    <property type="entry name" value="GHMP_kinase_C_sf"/>
</dbReference>
<dbReference type="InterPro" id="IPR006204">
    <property type="entry name" value="GHMP_kinase_N_dom"/>
</dbReference>
<dbReference type="InterPro" id="IPR006203">
    <property type="entry name" value="GHMP_knse_ATP-bd_CS"/>
</dbReference>
<dbReference type="InterPro" id="IPR006206">
    <property type="entry name" value="Mevalonate/galactokinase"/>
</dbReference>
<dbReference type="InterPro" id="IPR020568">
    <property type="entry name" value="Ribosomal_Su5_D2-typ_SF"/>
</dbReference>
<dbReference type="InterPro" id="IPR014721">
    <property type="entry name" value="Ribsml_uS5_D2-typ_fold_subgr"/>
</dbReference>
<dbReference type="NCBIfam" id="TIGR00131">
    <property type="entry name" value="gal_kin"/>
    <property type="match status" value="1"/>
</dbReference>
<dbReference type="NCBIfam" id="NF003472">
    <property type="entry name" value="PRK05101.1"/>
    <property type="match status" value="1"/>
</dbReference>
<dbReference type="PANTHER" id="PTHR10457:SF7">
    <property type="entry name" value="GALACTOKINASE-RELATED"/>
    <property type="match status" value="1"/>
</dbReference>
<dbReference type="PANTHER" id="PTHR10457">
    <property type="entry name" value="MEVALONATE KINASE/GALACTOKINASE"/>
    <property type="match status" value="1"/>
</dbReference>
<dbReference type="Pfam" id="PF10509">
    <property type="entry name" value="GalKase_gal_bdg"/>
    <property type="match status" value="1"/>
</dbReference>
<dbReference type="Pfam" id="PF08544">
    <property type="entry name" value="GHMP_kinases_C"/>
    <property type="match status" value="1"/>
</dbReference>
<dbReference type="Pfam" id="PF00288">
    <property type="entry name" value="GHMP_kinases_N"/>
    <property type="match status" value="1"/>
</dbReference>
<dbReference type="PIRSF" id="PIRSF000530">
    <property type="entry name" value="Galactokinase"/>
    <property type="match status" value="1"/>
</dbReference>
<dbReference type="PRINTS" id="PR00473">
    <property type="entry name" value="GALCTOKINASE"/>
</dbReference>
<dbReference type="PRINTS" id="PR00959">
    <property type="entry name" value="MEVGALKINASE"/>
</dbReference>
<dbReference type="SUPFAM" id="SSF55060">
    <property type="entry name" value="GHMP Kinase, C-terminal domain"/>
    <property type="match status" value="1"/>
</dbReference>
<dbReference type="SUPFAM" id="SSF54211">
    <property type="entry name" value="Ribosomal protein S5 domain 2-like"/>
    <property type="match status" value="1"/>
</dbReference>
<dbReference type="PROSITE" id="PS00106">
    <property type="entry name" value="GALACTOKINASE"/>
    <property type="match status" value="1"/>
</dbReference>
<dbReference type="PROSITE" id="PS00627">
    <property type="entry name" value="GHMP_KINASES_ATP"/>
    <property type="match status" value="1"/>
</dbReference>
<organism>
    <name type="scientific">Actinobacillus succinogenes (strain ATCC 55618 / DSM 22257 / CCUG 43843 / 130Z)</name>
    <dbReference type="NCBI Taxonomy" id="339671"/>
    <lineage>
        <taxon>Bacteria</taxon>
        <taxon>Pseudomonadati</taxon>
        <taxon>Pseudomonadota</taxon>
        <taxon>Gammaproteobacteria</taxon>
        <taxon>Pasteurellales</taxon>
        <taxon>Pasteurellaceae</taxon>
        <taxon>Actinobacillus</taxon>
    </lineage>
</organism>
<sequence length="385" mass="42413">MHPKSQSKQLFRQKYQKSPTLNVYAPGRVNIIGEHTDYNDGFVMPCAINYGTAISGAKRDDHRFNVYAADLDEFDEFRLDQPIIPNPSKKWTGYVRGVVKFVQERCPEFRQGADLVISGDVPLSSGLSSSASLEVAVGKFCQLLGDLPLNNTDIALIGQKAENRFVGANCGNMDQLISALGQADHLLMIDCRSLETVPTPVPEDIAVMIVNSHVKHDLVTGEYNTRRQQCETAAKFFGVKALRDVSIEQFQKREAELTALDPDTAKRARHIVTENQRVLDAAYALNHSDISRLGELMNASHVSMRDDFEITTPEIDYLVELAQSVIGKSGGARMTGGGFGGCIVGLAPKDKVDAVRQIIAENYEKRTGLKESFYVCTASQGVHQC</sequence>
<proteinExistence type="inferred from homology"/>
<accession>A6VQK2</accession>